<proteinExistence type="inferred from homology"/>
<evidence type="ECO:0000255" key="1">
    <source>
        <dbReference type="HAMAP-Rule" id="MF_01300"/>
    </source>
</evidence>
<accession>Q6N715</accession>
<keyword id="KW-0997">Cell inner membrane</keyword>
<keyword id="KW-1003">Cell membrane</keyword>
<keyword id="KW-0472">Membrane</keyword>
<keyword id="KW-0769">Symport</keyword>
<keyword id="KW-0812">Transmembrane</keyword>
<keyword id="KW-1133">Transmembrane helix</keyword>
<keyword id="KW-0813">Transport</keyword>
<reference key="1">
    <citation type="journal article" date="2004" name="Nat. Biotechnol.">
        <title>Complete genome sequence of the metabolically versatile photosynthetic bacterium Rhodopseudomonas palustris.</title>
        <authorList>
            <person name="Larimer F.W."/>
            <person name="Chain P."/>
            <person name="Hauser L."/>
            <person name="Lamerdin J.E."/>
            <person name="Malfatti S."/>
            <person name="Do L."/>
            <person name="Land M.L."/>
            <person name="Pelletier D.A."/>
            <person name="Beatty J.T."/>
            <person name="Lang A.S."/>
            <person name="Tabita F.R."/>
            <person name="Gibson J.L."/>
            <person name="Hanson T.E."/>
            <person name="Bobst C."/>
            <person name="Torres y Torres J.L."/>
            <person name="Peres C."/>
            <person name="Harrison F.H."/>
            <person name="Gibson J."/>
            <person name="Harwood C.S."/>
        </authorList>
    </citation>
    <scope>NUCLEOTIDE SEQUENCE [LARGE SCALE GENOMIC DNA]</scope>
    <source>
        <strain>ATCC BAA-98 / CGA009</strain>
    </source>
</reference>
<name>DCTA_RHOPA</name>
<sequence>MSATTHIDAPALPKRGKSKPFYKVLYVQVLFAIVVGVLVGWLSPHFATNEWIKALGDGFVKLIKMVIAPIIFCTVVSGIAHIQDARKVGRVGIKALLYFEVVSSFALVLGLIVGNLFPVGHGLAAKPDAGAVAKYVDQASHMSAVDFVLHIIPDSVVGAFAKGDILQVLLFAVLFGFALMALGERGHRLRDVIDDAAHAVFGVIAIVMKAAPIGAFGAMAFTIGKYGPAALGNLIGLVALFYATSALFVVLVLGTIAKFVGFNIFKFIGYIKDELLIVLGTSSSESALPQLMEKLERLGCSKSVVGLVVPTGYSFNLDGTNIYMTLATLFIAQALGIELSFGDQVAILLVAMLTSKGASGVTGAGFVTLAGTLAAVNPALVPGMAIVFSIDKFMSEVRALTNITGNGVAAVFVSWWEGELDHDRLRANLSRNVDPSDVETAVTTG</sequence>
<feature type="chain" id="PRO_0000321998" description="C4-dicarboxylate transport protein">
    <location>
        <begin position="1"/>
        <end position="445"/>
    </location>
</feature>
<feature type="transmembrane region" description="Helical" evidence="1">
    <location>
        <begin position="24"/>
        <end position="44"/>
    </location>
</feature>
<feature type="transmembrane region" description="Helical" evidence="1">
    <location>
        <begin position="62"/>
        <end position="82"/>
    </location>
</feature>
<feature type="transmembrane region" description="Helical" evidence="1">
    <location>
        <begin position="105"/>
        <end position="125"/>
    </location>
</feature>
<feature type="transmembrane region" description="Helical" evidence="1">
    <location>
        <begin position="163"/>
        <end position="183"/>
    </location>
</feature>
<feature type="transmembrane region" description="Helical" evidence="1">
    <location>
        <begin position="201"/>
        <end position="221"/>
    </location>
</feature>
<feature type="transmembrane region" description="Helical" evidence="1">
    <location>
        <begin position="234"/>
        <end position="254"/>
    </location>
</feature>
<feature type="transmembrane region" description="Helical" evidence="1">
    <location>
        <begin position="322"/>
        <end position="342"/>
    </location>
</feature>
<feature type="transmembrane region" description="Helical" evidence="1">
    <location>
        <begin position="370"/>
        <end position="390"/>
    </location>
</feature>
<protein>
    <recommendedName>
        <fullName evidence="1">C4-dicarboxylate transport protein</fullName>
    </recommendedName>
</protein>
<gene>
    <name evidence="1" type="primary">dctA</name>
    <name type="ordered locus">RPA2448</name>
</gene>
<comment type="function">
    <text evidence="1">Responsible for the transport of dicarboxylates such as succinate, fumarate, and malate from the periplasm across the membrane.</text>
</comment>
<comment type="subcellular location">
    <subcellularLocation>
        <location evidence="1">Cell inner membrane</location>
        <topology evidence="1">Multi-pass membrane protein</topology>
    </subcellularLocation>
</comment>
<comment type="similarity">
    <text evidence="1">Belongs to the dicarboxylate/amino acid:cation symporter (DAACS) (TC 2.A.23) family.</text>
</comment>
<organism>
    <name type="scientific">Rhodopseudomonas palustris (strain ATCC BAA-98 / CGA009)</name>
    <dbReference type="NCBI Taxonomy" id="258594"/>
    <lineage>
        <taxon>Bacteria</taxon>
        <taxon>Pseudomonadati</taxon>
        <taxon>Pseudomonadota</taxon>
        <taxon>Alphaproteobacteria</taxon>
        <taxon>Hyphomicrobiales</taxon>
        <taxon>Nitrobacteraceae</taxon>
        <taxon>Rhodopseudomonas</taxon>
    </lineage>
</organism>
<dbReference type="EMBL" id="BX572600">
    <property type="protein sequence ID" value="CAE27889.1"/>
    <property type="molecule type" value="Genomic_DNA"/>
</dbReference>
<dbReference type="RefSeq" id="WP_011157998.1">
    <property type="nucleotide sequence ID" value="NZ_CP116810.1"/>
</dbReference>
<dbReference type="SMR" id="Q6N715"/>
<dbReference type="STRING" id="258594.RPA2448"/>
<dbReference type="GeneID" id="66893511"/>
<dbReference type="eggNOG" id="COG1301">
    <property type="taxonomic scope" value="Bacteria"/>
</dbReference>
<dbReference type="HOGENOM" id="CLU_019375_7_0_5"/>
<dbReference type="PhylomeDB" id="Q6N715"/>
<dbReference type="GO" id="GO:0005886">
    <property type="term" value="C:plasma membrane"/>
    <property type="evidence" value="ECO:0007669"/>
    <property type="project" value="UniProtKB-SubCell"/>
</dbReference>
<dbReference type="GO" id="GO:0015138">
    <property type="term" value="F:fumarate transmembrane transporter activity"/>
    <property type="evidence" value="ECO:0007669"/>
    <property type="project" value="TreeGrafter"/>
</dbReference>
<dbReference type="GO" id="GO:0015366">
    <property type="term" value="F:malate:proton symporter activity"/>
    <property type="evidence" value="ECO:0007669"/>
    <property type="project" value="TreeGrafter"/>
</dbReference>
<dbReference type="GO" id="GO:0015141">
    <property type="term" value="F:succinate transmembrane transporter activity"/>
    <property type="evidence" value="ECO:0007669"/>
    <property type="project" value="TreeGrafter"/>
</dbReference>
<dbReference type="GO" id="GO:0070778">
    <property type="term" value="P:L-aspartate transmembrane transport"/>
    <property type="evidence" value="ECO:0007669"/>
    <property type="project" value="TreeGrafter"/>
</dbReference>
<dbReference type="FunFam" id="1.10.3860.10:FF:000001">
    <property type="entry name" value="C4-dicarboxylate transport protein"/>
    <property type="match status" value="1"/>
</dbReference>
<dbReference type="Gene3D" id="1.10.3860.10">
    <property type="entry name" value="Sodium:dicarboxylate symporter"/>
    <property type="match status" value="1"/>
</dbReference>
<dbReference type="HAMAP" id="MF_01300">
    <property type="entry name" value="C4_dicarb_transport"/>
    <property type="match status" value="1"/>
</dbReference>
<dbReference type="InterPro" id="IPR023954">
    <property type="entry name" value="C4_dicarb_transport"/>
</dbReference>
<dbReference type="InterPro" id="IPR001991">
    <property type="entry name" value="Na-dicarboxylate_symporter"/>
</dbReference>
<dbReference type="InterPro" id="IPR018107">
    <property type="entry name" value="Na-dicarboxylate_symporter_CS"/>
</dbReference>
<dbReference type="InterPro" id="IPR036458">
    <property type="entry name" value="Na:dicarbo_symporter_sf"/>
</dbReference>
<dbReference type="NCBIfam" id="NF002461">
    <property type="entry name" value="PRK01663.1"/>
    <property type="match status" value="1"/>
</dbReference>
<dbReference type="PANTHER" id="PTHR42865:SF1">
    <property type="entry name" value="AEROBIC C4-DICARBOXYLATE TRANSPORT PROTEIN"/>
    <property type="match status" value="1"/>
</dbReference>
<dbReference type="PANTHER" id="PTHR42865">
    <property type="entry name" value="PROTON/GLUTAMATE-ASPARTATE SYMPORTER"/>
    <property type="match status" value="1"/>
</dbReference>
<dbReference type="Pfam" id="PF00375">
    <property type="entry name" value="SDF"/>
    <property type="match status" value="1"/>
</dbReference>
<dbReference type="PRINTS" id="PR00173">
    <property type="entry name" value="EDTRNSPORT"/>
</dbReference>
<dbReference type="SUPFAM" id="SSF118215">
    <property type="entry name" value="Proton glutamate symport protein"/>
    <property type="match status" value="1"/>
</dbReference>
<dbReference type="PROSITE" id="PS00714">
    <property type="entry name" value="NA_DICARBOXYL_SYMP_2"/>
    <property type="match status" value="1"/>
</dbReference>